<accession>B2WM34</accession>
<keyword id="KW-0227">DNA damage</keyword>
<keyword id="KW-0233">DNA recombination</keyword>
<keyword id="KW-0234">DNA repair</keyword>
<keyword id="KW-0255">Endonuclease</keyword>
<keyword id="KW-0378">Hydrolase</keyword>
<keyword id="KW-0479">Metal-binding</keyword>
<keyword id="KW-0540">Nuclease</keyword>
<keyword id="KW-0539">Nucleus</keyword>
<keyword id="KW-1185">Reference proteome</keyword>
<keyword id="KW-0862">Zinc</keyword>
<keyword id="KW-0863">Zinc-finger</keyword>
<comment type="function">
    <text evidence="1">Catalytic subunit of the slx1-slx4 structure-specific endonuclease that resolves DNA secondary structures generated during DNA repair and recombination. Has endonuclease activity towards branched DNA substrates, introducing single-strand cuts in duplex DNA close to junctions with ss-DNA.</text>
</comment>
<comment type="cofactor">
    <cofactor evidence="1">
        <name>a divalent metal cation</name>
        <dbReference type="ChEBI" id="CHEBI:60240"/>
    </cofactor>
</comment>
<comment type="subunit">
    <text evidence="1">Forms a heterodimer with slx4.</text>
</comment>
<comment type="subcellular location">
    <subcellularLocation>
        <location evidence="1">Nucleus</location>
    </subcellularLocation>
</comment>
<comment type="similarity">
    <text evidence="1">Belongs to the SLX1 family.</text>
</comment>
<name>SLX1_PYRTR</name>
<sequence>MTDGLKIDSRPLPAFYCCYLLRSKNRKAFYIGSTPNPARRLGQHNGSSKGGAKRTSMQGKRPWEMTCIVTGFPSRFAALQFEWAWQNTHATRHIERDVREARKDELEKGRKNASPVKRSRPPMSLEARLKNLHHLLGVGSFSRWPLHVRFFAPDVFSQWEKHISKMNTSLRKSITIRLTPAELPKLAPDVSSEMRTHFIPEVIRAIPVAYEDIKPYVEKSMSTLRDGKTRDCGVCKKDVNVDRSLVLICPNETCCSVSHMSCLSQRFLAEEANKEAFIPIEGTCPSCHSPIKWSDMIKELSLRMRGEDELKTLFKTKRKKKQVDTTEDDTDEYPDIDDLNADLDEDLDETWMENVNEEDDKPRS</sequence>
<organism>
    <name type="scientific">Pyrenophora tritici-repentis (strain Pt-1C-BFP)</name>
    <name type="common">Wheat tan spot fungus</name>
    <name type="synonym">Drechslera tritici-repentis</name>
    <dbReference type="NCBI Taxonomy" id="426418"/>
    <lineage>
        <taxon>Eukaryota</taxon>
        <taxon>Fungi</taxon>
        <taxon>Dikarya</taxon>
        <taxon>Ascomycota</taxon>
        <taxon>Pezizomycotina</taxon>
        <taxon>Dothideomycetes</taxon>
        <taxon>Pleosporomycetidae</taxon>
        <taxon>Pleosporales</taxon>
        <taxon>Pleosporineae</taxon>
        <taxon>Pleosporaceae</taxon>
        <taxon>Pyrenophora</taxon>
    </lineage>
</organism>
<proteinExistence type="inferred from homology"/>
<gene>
    <name type="primary">slx1</name>
    <name type="ORF">PTRG_11044</name>
</gene>
<feature type="chain" id="PRO_0000383798" description="Structure-specific endonuclease subunit slx1">
    <location>
        <begin position="1"/>
        <end position="364"/>
    </location>
</feature>
<feature type="domain" description="GIY-YIG" evidence="1">
    <location>
        <begin position="14"/>
        <end position="95"/>
    </location>
</feature>
<feature type="zinc finger region" description="SLX1-type" evidence="1">
    <location>
        <begin position="232"/>
        <end position="287"/>
    </location>
</feature>
<feature type="region of interest" description="Disordered" evidence="2">
    <location>
        <begin position="34"/>
        <end position="59"/>
    </location>
</feature>
<feature type="region of interest" description="Disordered" evidence="2">
    <location>
        <begin position="101"/>
        <end position="121"/>
    </location>
</feature>
<feature type="region of interest" description="Disordered" evidence="2">
    <location>
        <begin position="318"/>
        <end position="364"/>
    </location>
</feature>
<feature type="compositionally biased region" description="Basic and acidic residues" evidence="2">
    <location>
        <begin position="101"/>
        <end position="110"/>
    </location>
</feature>
<feature type="compositionally biased region" description="Acidic residues" evidence="2">
    <location>
        <begin position="325"/>
        <end position="364"/>
    </location>
</feature>
<evidence type="ECO:0000255" key="1">
    <source>
        <dbReference type="HAMAP-Rule" id="MF_03100"/>
    </source>
</evidence>
<evidence type="ECO:0000256" key="2">
    <source>
        <dbReference type="SAM" id="MobiDB-lite"/>
    </source>
</evidence>
<dbReference type="EC" id="3.1.-.-" evidence="1"/>
<dbReference type="EMBL" id="DS231629">
    <property type="protein sequence ID" value="EDU44094.1"/>
    <property type="molecule type" value="Genomic_DNA"/>
</dbReference>
<dbReference type="RefSeq" id="XP_001941375.1">
    <property type="nucleotide sequence ID" value="XM_001941340.1"/>
</dbReference>
<dbReference type="SMR" id="B2WM34"/>
<dbReference type="FunCoup" id="B2WM34">
    <property type="interactions" value="395"/>
</dbReference>
<dbReference type="STRING" id="426418.B2WM34"/>
<dbReference type="EnsemblFungi" id="EDU44094">
    <property type="protein sequence ID" value="EDU44094"/>
    <property type="gene ID" value="PTRG_11044"/>
</dbReference>
<dbReference type="GeneID" id="6349356"/>
<dbReference type="KEGG" id="ptrr:6349356"/>
<dbReference type="eggNOG" id="KOG3005">
    <property type="taxonomic scope" value="Eukaryota"/>
</dbReference>
<dbReference type="HOGENOM" id="CLU_030739_1_1_1"/>
<dbReference type="InParanoid" id="B2WM34"/>
<dbReference type="OMA" id="HNRGCDF"/>
<dbReference type="OrthoDB" id="27551at28556"/>
<dbReference type="Proteomes" id="UP000001471">
    <property type="component" value="Unassembled WGS sequence"/>
</dbReference>
<dbReference type="GO" id="GO:0033557">
    <property type="term" value="C:Slx1-Slx4 complex"/>
    <property type="evidence" value="ECO:0007669"/>
    <property type="project" value="UniProtKB-UniRule"/>
</dbReference>
<dbReference type="GO" id="GO:0017108">
    <property type="term" value="F:5'-flap endonuclease activity"/>
    <property type="evidence" value="ECO:0007669"/>
    <property type="project" value="InterPro"/>
</dbReference>
<dbReference type="GO" id="GO:0008821">
    <property type="term" value="F:crossover junction DNA endonuclease activity"/>
    <property type="evidence" value="ECO:0007669"/>
    <property type="project" value="TreeGrafter"/>
</dbReference>
<dbReference type="GO" id="GO:0008270">
    <property type="term" value="F:zinc ion binding"/>
    <property type="evidence" value="ECO:0007669"/>
    <property type="project" value="UniProtKB-KW"/>
</dbReference>
<dbReference type="GO" id="GO:0000724">
    <property type="term" value="P:double-strand break repair via homologous recombination"/>
    <property type="evidence" value="ECO:0007669"/>
    <property type="project" value="TreeGrafter"/>
</dbReference>
<dbReference type="CDD" id="cd10455">
    <property type="entry name" value="GIY-YIG_SLX1"/>
    <property type="match status" value="1"/>
</dbReference>
<dbReference type="FunFam" id="3.40.1440.10:FF:000006">
    <property type="entry name" value="Structure-specific endonuclease subunit SLX1"/>
    <property type="match status" value="1"/>
</dbReference>
<dbReference type="Gene3D" id="3.40.1440.10">
    <property type="entry name" value="GIY-YIG endonuclease"/>
    <property type="match status" value="1"/>
</dbReference>
<dbReference type="Gene3D" id="3.30.40.10">
    <property type="entry name" value="Zinc/RING finger domain, C3HC4 (zinc finger)"/>
    <property type="match status" value="1"/>
</dbReference>
<dbReference type="HAMAP" id="MF_03100">
    <property type="entry name" value="Endonuc_su_Slx1"/>
    <property type="match status" value="1"/>
</dbReference>
<dbReference type="InterPro" id="IPR000305">
    <property type="entry name" value="GIY-YIG_endonuc"/>
</dbReference>
<dbReference type="InterPro" id="IPR035901">
    <property type="entry name" value="GIY-YIG_endonuc_sf"/>
</dbReference>
<dbReference type="InterPro" id="IPR027520">
    <property type="entry name" value="Slx1"/>
</dbReference>
<dbReference type="InterPro" id="IPR048749">
    <property type="entry name" value="SLX1_C"/>
</dbReference>
<dbReference type="InterPro" id="IPR050381">
    <property type="entry name" value="SLX1_endonuclease"/>
</dbReference>
<dbReference type="InterPro" id="IPR013083">
    <property type="entry name" value="Znf_RING/FYVE/PHD"/>
</dbReference>
<dbReference type="PANTHER" id="PTHR20208">
    <property type="entry name" value="STRUCTURE-SPECIFIC ENDONUCLEASE SUBUNIT SLX1"/>
    <property type="match status" value="1"/>
</dbReference>
<dbReference type="PANTHER" id="PTHR20208:SF10">
    <property type="entry name" value="STRUCTURE-SPECIFIC ENDONUCLEASE SUBUNIT SLX1"/>
    <property type="match status" value="1"/>
</dbReference>
<dbReference type="Pfam" id="PF01541">
    <property type="entry name" value="GIY-YIG"/>
    <property type="match status" value="1"/>
</dbReference>
<dbReference type="Pfam" id="PF21202">
    <property type="entry name" value="SLX1_C"/>
    <property type="match status" value="1"/>
</dbReference>
<dbReference type="SUPFAM" id="SSF82771">
    <property type="entry name" value="GIY-YIG endonuclease"/>
    <property type="match status" value="1"/>
</dbReference>
<dbReference type="PROSITE" id="PS50164">
    <property type="entry name" value="GIY_YIG"/>
    <property type="match status" value="1"/>
</dbReference>
<reference key="1">
    <citation type="journal article" date="2013" name="G3 (Bethesda)">
        <title>Comparative genomics of a plant-pathogenic fungus, Pyrenophora tritici-repentis, reveals transduplication and the impact of repeat elements on pathogenicity and population divergence.</title>
        <authorList>
            <person name="Manning V.A."/>
            <person name="Pandelova I."/>
            <person name="Dhillon B."/>
            <person name="Wilhelm L.J."/>
            <person name="Goodwin S.B."/>
            <person name="Berlin A.M."/>
            <person name="Figueroa M."/>
            <person name="Freitag M."/>
            <person name="Hane J.K."/>
            <person name="Henrissat B."/>
            <person name="Holman W.H."/>
            <person name="Kodira C.D."/>
            <person name="Martin J."/>
            <person name="Oliver R.P."/>
            <person name="Robbertse B."/>
            <person name="Schackwitz W."/>
            <person name="Schwartz D.C."/>
            <person name="Spatafora J.W."/>
            <person name="Turgeon B.G."/>
            <person name="Yandava C."/>
            <person name="Young S."/>
            <person name="Zhou S."/>
            <person name="Zeng Q."/>
            <person name="Grigoriev I.V."/>
            <person name="Ma L.-J."/>
            <person name="Ciuffetti L.M."/>
        </authorList>
    </citation>
    <scope>NUCLEOTIDE SEQUENCE [LARGE SCALE GENOMIC DNA]</scope>
    <source>
        <strain>Pt-1C-BFP</strain>
    </source>
</reference>
<protein>
    <recommendedName>
        <fullName evidence="1">Structure-specific endonuclease subunit slx1</fullName>
        <ecNumber evidence="1">3.1.-.-</ecNumber>
    </recommendedName>
</protein>